<proteinExistence type="inferred from homology"/>
<accession>P62579</accession>
<accession>P00483</accession>
<keyword id="KW-0012">Acyltransferase</keyword>
<keyword id="KW-0046">Antibiotic resistance</keyword>
<keyword id="KW-0808">Transferase</keyword>
<dbReference type="EC" id="2.3.1.28"/>
<dbReference type="EMBL" id="M62822">
    <property type="protein sequence ID" value="AAA21891.1"/>
    <property type="molecule type" value="Genomic_DNA"/>
</dbReference>
<dbReference type="PIR" id="JQ0972">
    <property type="entry name" value="JQ0972"/>
</dbReference>
<dbReference type="SMR" id="P62579"/>
<dbReference type="OMA" id="VHHGLMD"/>
<dbReference type="OrthoDB" id="9801766at2"/>
<dbReference type="GO" id="GO:0008811">
    <property type="term" value="F:chloramphenicol O-acetyltransferase activity"/>
    <property type="evidence" value="ECO:0007669"/>
    <property type="project" value="UniProtKB-EC"/>
</dbReference>
<dbReference type="GO" id="GO:0046677">
    <property type="term" value="P:response to antibiotic"/>
    <property type="evidence" value="ECO:0007669"/>
    <property type="project" value="UniProtKB-KW"/>
</dbReference>
<dbReference type="Gene3D" id="3.30.559.10">
    <property type="entry name" value="Chloramphenicol acetyltransferase-like domain"/>
    <property type="match status" value="1"/>
</dbReference>
<dbReference type="InterPro" id="IPR023213">
    <property type="entry name" value="CAT-like_dom_sf"/>
</dbReference>
<dbReference type="InterPro" id="IPR018372">
    <property type="entry name" value="Chloramphenicol_AcTrfase_AS"/>
</dbReference>
<dbReference type="InterPro" id="IPR001707">
    <property type="entry name" value="Cmp_AcTrfase"/>
</dbReference>
<dbReference type="NCBIfam" id="NF000491">
    <property type="entry name" value="chloram_CatA"/>
    <property type="match status" value="1"/>
</dbReference>
<dbReference type="PANTHER" id="PTHR38474:SF2">
    <property type="entry name" value="CHLORAMPHENICOL ACETYLTRANSFERASE"/>
    <property type="match status" value="1"/>
</dbReference>
<dbReference type="PANTHER" id="PTHR38474">
    <property type="entry name" value="SLR0299 PROTEIN"/>
    <property type="match status" value="1"/>
</dbReference>
<dbReference type="Pfam" id="PF00302">
    <property type="entry name" value="CAT"/>
    <property type="match status" value="1"/>
</dbReference>
<dbReference type="PIRSF" id="PIRSF000440">
    <property type="entry name" value="CAT"/>
    <property type="match status" value="1"/>
</dbReference>
<dbReference type="SMART" id="SM01059">
    <property type="entry name" value="CAT"/>
    <property type="match status" value="1"/>
</dbReference>
<dbReference type="SUPFAM" id="SSF52777">
    <property type="entry name" value="CoA-dependent acyltransferases"/>
    <property type="match status" value="1"/>
</dbReference>
<dbReference type="PROSITE" id="PS00100">
    <property type="entry name" value="CAT"/>
    <property type="match status" value="1"/>
</dbReference>
<reference key="1">
    <citation type="journal article" date="1991" name="Plasmid">
        <title>Identification of an Acinetobacter baumannii gene region with sequence and organizational similarity to Tn2670.</title>
        <authorList>
            <person name="Elisha B.G."/>
            <person name="Steyn L.M."/>
        </authorList>
    </citation>
    <scope>NUCLEOTIDE SEQUENCE [GENOMIC DNA]</scope>
</reference>
<gene>
    <name type="primary">cat</name>
</gene>
<sequence>MEKKITGYTTVDISQWHRKEHFEAFQSVAQCTYNQTVQLDITAFLKTVKKNKHKFYPAFIHILARLMNAHPEFRMAMKDGELVIWDSVHPCYTVFHEQTETFSSLWSEYHDDFRQFLHIYSQDVACYGENLAYFPKGFIENMFFVSANPWVSFTSFDLNVANMDNFFAPVFTMGKYYTQGDKVLMPLAIQVHHAVCDGFHVGRMLNELQQYCDEWQGGA</sequence>
<organism>
    <name type="scientific">Acinetobacter baumannii</name>
    <dbReference type="NCBI Taxonomy" id="470"/>
    <lineage>
        <taxon>Bacteria</taxon>
        <taxon>Pseudomonadati</taxon>
        <taxon>Pseudomonadota</taxon>
        <taxon>Gammaproteobacteria</taxon>
        <taxon>Moraxellales</taxon>
        <taxon>Moraxellaceae</taxon>
        <taxon>Acinetobacter</taxon>
        <taxon>Acinetobacter calcoaceticus/baumannii complex</taxon>
    </lineage>
</organism>
<comment type="function">
    <text>This enzyme is an effector of chloramphenicol resistance in bacteria.</text>
</comment>
<comment type="catalytic activity">
    <reaction evidence="1">
        <text>chloramphenicol + acetyl-CoA = chloramphenicol 3-acetate + CoA</text>
        <dbReference type="Rhea" id="RHEA:18421"/>
        <dbReference type="ChEBI" id="CHEBI:16730"/>
        <dbReference type="ChEBI" id="CHEBI:17698"/>
        <dbReference type="ChEBI" id="CHEBI:57287"/>
        <dbReference type="ChEBI" id="CHEBI:57288"/>
        <dbReference type="EC" id="2.3.1.28"/>
    </reaction>
</comment>
<comment type="similarity">
    <text evidence="2">Belongs to the chloramphenicol acetyltransferase family.</text>
</comment>
<feature type="chain" id="PRO_0000165864" description="Chloramphenicol acetyltransferase">
    <location>
        <begin position="1"/>
        <end position="219"/>
    </location>
</feature>
<feature type="active site" description="Proton acceptor" evidence="1">
    <location>
        <position position="193"/>
    </location>
</feature>
<name>CAT_ACIBA</name>
<protein>
    <recommendedName>
        <fullName>Chloramphenicol acetyltransferase</fullName>
        <shortName>CAT</shortName>
        <ecNumber>2.3.1.28</ecNumber>
    </recommendedName>
</protein>
<evidence type="ECO:0000255" key="1">
    <source>
        <dbReference type="PROSITE-ProRule" id="PRU10021"/>
    </source>
</evidence>
<evidence type="ECO:0000305" key="2"/>